<dbReference type="EMBL" id="Z18631">
    <property type="protein sequence ID" value="CAA79235.1"/>
    <property type="molecule type" value="Genomic_DNA"/>
</dbReference>
<dbReference type="EMBL" id="AL009126">
    <property type="protein sequence ID" value="CAB13537.1"/>
    <property type="molecule type" value="Genomic_DNA"/>
</dbReference>
<dbReference type="PIR" id="F36905">
    <property type="entry name" value="F36905"/>
</dbReference>
<dbReference type="RefSeq" id="NP_389546.1">
    <property type="nucleotide sequence ID" value="NC_000964.3"/>
</dbReference>
<dbReference type="RefSeq" id="WP_003220950.1">
    <property type="nucleotide sequence ID" value="NZ_OZ025638.1"/>
</dbReference>
<dbReference type="SMR" id="P32730"/>
<dbReference type="FunCoup" id="P32730">
    <property type="interactions" value="15"/>
</dbReference>
<dbReference type="STRING" id="224308.BSU16640"/>
<dbReference type="PaxDb" id="224308-BSU16640"/>
<dbReference type="KEGG" id="bsu:BSU16640"/>
<dbReference type="PATRIC" id="fig|224308.179.peg.1805"/>
<dbReference type="eggNOG" id="COG1550">
    <property type="taxonomic scope" value="Bacteria"/>
</dbReference>
<dbReference type="InParanoid" id="P32730"/>
<dbReference type="OrthoDB" id="9809023at2"/>
<dbReference type="PhylomeDB" id="P32730"/>
<dbReference type="BioCyc" id="BSUB:BSU16640-MONOMER"/>
<dbReference type="PRO" id="PR:P32730"/>
<dbReference type="Proteomes" id="UP000001570">
    <property type="component" value="Chromosome"/>
</dbReference>
<dbReference type="Gene3D" id="3.30.70.1120">
    <property type="entry name" value="TT1725-like"/>
    <property type="match status" value="1"/>
</dbReference>
<dbReference type="InterPro" id="IPR007546">
    <property type="entry name" value="DUF503"/>
</dbReference>
<dbReference type="InterPro" id="IPR036746">
    <property type="entry name" value="TT1725-like_sf"/>
</dbReference>
<dbReference type="PANTHER" id="PTHR36441:SF1">
    <property type="entry name" value="DUF503 DOMAIN-CONTAINING PROTEIN"/>
    <property type="match status" value="1"/>
</dbReference>
<dbReference type="PANTHER" id="PTHR36441">
    <property type="entry name" value="HYPOTHETICAL CYTOSOLIC PROTEIN"/>
    <property type="match status" value="1"/>
</dbReference>
<dbReference type="Pfam" id="PF04456">
    <property type="entry name" value="DUF503"/>
    <property type="match status" value="1"/>
</dbReference>
<dbReference type="SUPFAM" id="SSF103007">
    <property type="entry name" value="Hypothetical protein TT1725"/>
    <property type="match status" value="1"/>
</dbReference>
<feature type="chain" id="PRO_0000049628" description="Uncharacterized protein YlxP">
    <location>
        <begin position="1"/>
        <end position="92"/>
    </location>
</feature>
<name>YLXP_BACSU</name>
<sequence length="92" mass="10652">MIGFAECECIIYDAGSLKEKRAVLKRILTRVQNKFNVSISEIGYQDTWQRTSFGIAAVSSSRVQTEKELQRVLAFIDSFPEIERTITRTEWF</sequence>
<gene>
    <name type="primary">ylxP</name>
    <name type="synonym">ymxD</name>
    <name type="ordered locus">BSU16640</name>
</gene>
<reference key="1">
    <citation type="journal article" date="1993" name="J. Bacteriol.">
        <title>Similar organization of the nusA-infB operon in Bacillus subtilis and Escherichia coli.</title>
        <authorList>
            <person name="Shazand K."/>
            <person name="Tucker J."/>
            <person name="Grunberg-Manago M."/>
            <person name="Rabinowitz J.C."/>
            <person name="Leighton T."/>
        </authorList>
    </citation>
    <scope>NUCLEOTIDE SEQUENCE [GENOMIC DNA]</scope>
    <source>
        <strain>168</strain>
    </source>
</reference>
<reference key="2">
    <citation type="journal article" date="1997" name="Nature">
        <title>The complete genome sequence of the Gram-positive bacterium Bacillus subtilis.</title>
        <authorList>
            <person name="Kunst F."/>
            <person name="Ogasawara N."/>
            <person name="Moszer I."/>
            <person name="Albertini A.M."/>
            <person name="Alloni G."/>
            <person name="Azevedo V."/>
            <person name="Bertero M.G."/>
            <person name="Bessieres P."/>
            <person name="Bolotin A."/>
            <person name="Borchert S."/>
            <person name="Borriss R."/>
            <person name="Boursier L."/>
            <person name="Brans A."/>
            <person name="Braun M."/>
            <person name="Brignell S.C."/>
            <person name="Bron S."/>
            <person name="Brouillet S."/>
            <person name="Bruschi C.V."/>
            <person name="Caldwell B."/>
            <person name="Capuano V."/>
            <person name="Carter N.M."/>
            <person name="Choi S.-K."/>
            <person name="Codani J.-J."/>
            <person name="Connerton I.F."/>
            <person name="Cummings N.J."/>
            <person name="Daniel R.A."/>
            <person name="Denizot F."/>
            <person name="Devine K.M."/>
            <person name="Duesterhoeft A."/>
            <person name="Ehrlich S.D."/>
            <person name="Emmerson P.T."/>
            <person name="Entian K.-D."/>
            <person name="Errington J."/>
            <person name="Fabret C."/>
            <person name="Ferrari E."/>
            <person name="Foulger D."/>
            <person name="Fritz C."/>
            <person name="Fujita M."/>
            <person name="Fujita Y."/>
            <person name="Fuma S."/>
            <person name="Galizzi A."/>
            <person name="Galleron N."/>
            <person name="Ghim S.-Y."/>
            <person name="Glaser P."/>
            <person name="Goffeau A."/>
            <person name="Golightly E.J."/>
            <person name="Grandi G."/>
            <person name="Guiseppi G."/>
            <person name="Guy B.J."/>
            <person name="Haga K."/>
            <person name="Haiech J."/>
            <person name="Harwood C.R."/>
            <person name="Henaut A."/>
            <person name="Hilbert H."/>
            <person name="Holsappel S."/>
            <person name="Hosono S."/>
            <person name="Hullo M.-F."/>
            <person name="Itaya M."/>
            <person name="Jones L.-M."/>
            <person name="Joris B."/>
            <person name="Karamata D."/>
            <person name="Kasahara Y."/>
            <person name="Klaerr-Blanchard M."/>
            <person name="Klein C."/>
            <person name="Kobayashi Y."/>
            <person name="Koetter P."/>
            <person name="Koningstein G."/>
            <person name="Krogh S."/>
            <person name="Kumano M."/>
            <person name="Kurita K."/>
            <person name="Lapidus A."/>
            <person name="Lardinois S."/>
            <person name="Lauber J."/>
            <person name="Lazarevic V."/>
            <person name="Lee S.-M."/>
            <person name="Levine A."/>
            <person name="Liu H."/>
            <person name="Masuda S."/>
            <person name="Mauel C."/>
            <person name="Medigue C."/>
            <person name="Medina N."/>
            <person name="Mellado R.P."/>
            <person name="Mizuno M."/>
            <person name="Moestl D."/>
            <person name="Nakai S."/>
            <person name="Noback M."/>
            <person name="Noone D."/>
            <person name="O'Reilly M."/>
            <person name="Ogawa K."/>
            <person name="Ogiwara A."/>
            <person name="Oudega B."/>
            <person name="Park S.-H."/>
            <person name="Parro V."/>
            <person name="Pohl T.M."/>
            <person name="Portetelle D."/>
            <person name="Porwollik S."/>
            <person name="Prescott A.M."/>
            <person name="Presecan E."/>
            <person name="Pujic P."/>
            <person name="Purnelle B."/>
            <person name="Rapoport G."/>
            <person name="Rey M."/>
            <person name="Reynolds S."/>
            <person name="Rieger M."/>
            <person name="Rivolta C."/>
            <person name="Rocha E."/>
            <person name="Roche B."/>
            <person name="Rose M."/>
            <person name="Sadaie Y."/>
            <person name="Sato T."/>
            <person name="Scanlan E."/>
            <person name="Schleich S."/>
            <person name="Schroeter R."/>
            <person name="Scoffone F."/>
            <person name="Sekiguchi J."/>
            <person name="Sekowska A."/>
            <person name="Seror S.J."/>
            <person name="Serror P."/>
            <person name="Shin B.-S."/>
            <person name="Soldo B."/>
            <person name="Sorokin A."/>
            <person name="Tacconi E."/>
            <person name="Takagi T."/>
            <person name="Takahashi H."/>
            <person name="Takemaru K."/>
            <person name="Takeuchi M."/>
            <person name="Tamakoshi A."/>
            <person name="Tanaka T."/>
            <person name="Terpstra P."/>
            <person name="Tognoni A."/>
            <person name="Tosato V."/>
            <person name="Uchiyama S."/>
            <person name="Vandenbol M."/>
            <person name="Vannier F."/>
            <person name="Vassarotti A."/>
            <person name="Viari A."/>
            <person name="Wambutt R."/>
            <person name="Wedler E."/>
            <person name="Wedler H."/>
            <person name="Weitzenegger T."/>
            <person name="Winters P."/>
            <person name="Wipat A."/>
            <person name="Yamamoto H."/>
            <person name="Yamane K."/>
            <person name="Yasumoto K."/>
            <person name="Yata K."/>
            <person name="Yoshida K."/>
            <person name="Yoshikawa H.-F."/>
            <person name="Zumstein E."/>
            <person name="Yoshikawa H."/>
            <person name="Danchin A."/>
        </authorList>
    </citation>
    <scope>NUCLEOTIDE SEQUENCE [LARGE SCALE GENOMIC DNA]</scope>
    <source>
        <strain>168</strain>
    </source>
</reference>
<protein>
    <recommendedName>
        <fullName>Uncharacterized protein YlxP</fullName>
    </recommendedName>
    <alternativeName>
        <fullName>ORF5</fullName>
    </alternativeName>
</protein>
<accession>P32730</accession>
<organism>
    <name type="scientific">Bacillus subtilis (strain 168)</name>
    <dbReference type="NCBI Taxonomy" id="224308"/>
    <lineage>
        <taxon>Bacteria</taxon>
        <taxon>Bacillati</taxon>
        <taxon>Bacillota</taxon>
        <taxon>Bacilli</taxon>
        <taxon>Bacillales</taxon>
        <taxon>Bacillaceae</taxon>
        <taxon>Bacillus</taxon>
    </lineage>
</organism>
<keyword id="KW-1185">Reference proteome</keyword>
<proteinExistence type="predicted"/>